<keyword id="KW-1185">Reference proteome</keyword>
<name>Y516_AERPE</name>
<accession>Q9YER5</accession>
<evidence type="ECO:0000305" key="1"/>
<proteinExistence type="inferred from homology"/>
<reference key="1">
    <citation type="journal article" date="1999" name="DNA Res.">
        <title>Complete genome sequence of an aerobic hyper-thermophilic crenarchaeon, Aeropyrum pernix K1.</title>
        <authorList>
            <person name="Kawarabayasi Y."/>
            <person name="Hino Y."/>
            <person name="Horikawa H."/>
            <person name="Yamazaki S."/>
            <person name="Haikawa Y."/>
            <person name="Jin-no K."/>
            <person name="Takahashi M."/>
            <person name="Sekine M."/>
            <person name="Baba S."/>
            <person name="Ankai A."/>
            <person name="Kosugi H."/>
            <person name="Hosoyama A."/>
            <person name="Fukui S."/>
            <person name="Nagai Y."/>
            <person name="Nishijima K."/>
            <person name="Nakazawa H."/>
            <person name="Takamiya M."/>
            <person name="Masuda S."/>
            <person name="Funahashi T."/>
            <person name="Tanaka T."/>
            <person name="Kudoh Y."/>
            <person name="Yamazaki J."/>
            <person name="Kushida N."/>
            <person name="Oguchi A."/>
            <person name="Aoki K."/>
            <person name="Kubota K."/>
            <person name="Nakamura Y."/>
            <person name="Nomura N."/>
            <person name="Sako Y."/>
            <person name="Kikuchi H."/>
        </authorList>
    </citation>
    <scope>NUCLEOTIDE SEQUENCE [LARGE SCALE GENOMIC DNA]</scope>
    <source>
        <strain>ATCC 700893 / DSM 11879 / JCM 9820 / NBRC 100138 / K1</strain>
    </source>
</reference>
<protein>
    <recommendedName>
        <fullName>UPF0113 protein APE_0516.1</fullName>
    </recommendedName>
</protein>
<dbReference type="EMBL" id="BA000002">
    <property type="protein sequence ID" value="BAA79481.2"/>
    <property type="molecule type" value="Genomic_DNA"/>
</dbReference>
<dbReference type="PIR" id="E72748">
    <property type="entry name" value="E72748"/>
</dbReference>
<dbReference type="RefSeq" id="WP_010865805.1">
    <property type="nucleotide sequence ID" value="NC_000854.2"/>
</dbReference>
<dbReference type="SMR" id="Q9YER5"/>
<dbReference type="STRING" id="272557.APE_0516.1"/>
<dbReference type="EnsemblBacteria" id="BAA79481">
    <property type="protein sequence ID" value="BAA79481"/>
    <property type="gene ID" value="APE_0516.1"/>
</dbReference>
<dbReference type="GeneID" id="1444693"/>
<dbReference type="KEGG" id="ape:APE_0516.1"/>
<dbReference type="PATRIC" id="fig|272557.25.peg.389"/>
<dbReference type="eggNOG" id="arCOG00993">
    <property type="taxonomic scope" value="Archaea"/>
</dbReference>
<dbReference type="Proteomes" id="UP000002518">
    <property type="component" value="Chromosome"/>
</dbReference>
<dbReference type="GO" id="GO:0003723">
    <property type="term" value="F:RNA binding"/>
    <property type="evidence" value="ECO:0007669"/>
    <property type="project" value="InterPro"/>
</dbReference>
<dbReference type="Gene3D" id="2.30.130.10">
    <property type="entry name" value="PUA domain"/>
    <property type="match status" value="1"/>
</dbReference>
<dbReference type="InterPro" id="IPR040598">
    <property type="entry name" value="NIP7_N"/>
</dbReference>
<dbReference type="InterPro" id="IPR036974">
    <property type="entry name" value="PUA_sf"/>
</dbReference>
<dbReference type="InterPro" id="IPR005155">
    <property type="entry name" value="UPF0113_PUA"/>
</dbReference>
<dbReference type="Pfam" id="PF17833">
    <property type="entry name" value="pre-PUA_NIP7"/>
    <property type="match status" value="1"/>
</dbReference>
<dbReference type="Pfam" id="PF03657">
    <property type="entry name" value="UPF0113"/>
    <property type="match status" value="1"/>
</dbReference>
<feature type="chain" id="PRO_0000159746" description="UPF0113 protein APE_0516.1">
    <location>
        <begin position="1"/>
        <end position="174"/>
    </location>
</feature>
<sequence length="174" mass="19244">MQGEEEGLSRYRLRPPTPREERLVEGFLRAIGFKVNPYAEGMTVLDPGGKFKEVFYLPWGLRRAVERLPLHYSAGLNLGSIGERGFRPSLHLARELAPLCGSPVKCIRLSPRGEKLFLYSRDVYGDNIASHTSGAALVVGSNGQPLGWGVGLSRDGLLIVKPLRDLGWYLRRGG</sequence>
<gene>
    <name type="ordered locus">APE_0516.1</name>
</gene>
<organism>
    <name type="scientific">Aeropyrum pernix (strain ATCC 700893 / DSM 11879 / JCM 9820 / NBRC 100138 / K1)</name>
    <dbReference type="NCBI Taxonomy" id="272557"/>
    <lineage>
        <taxon>Archaea</taxon>
        <taxon>Thermoproteota</taxon>
        <taxon>Thermoprotei</taxon>
        <taxon>Desulfurococcales</taxon>
        <taxon>Desulfurococcaceae</taxon>
        <taxon>Aeropyrum</taxon>
    </lineage>
</organism>
<comment type="similarity">
    <text evidence="1">Belongs to the UPF0113 family.</text>
</comment>